<feature type="chain" id="PRO_1000095907" description="Indole-3-glycerol phosphate synthase">
    <location>
        <begin position="1"/>
        <end position="265"/>
    </location>
</feature>
<protein>
    <recommendedName>
        <fullName evidence="1">Indole-3-glycerol phosphate synthase</fullName>
        <shortName evidence="1">IGPS</shortName>
        <ecNumber evidence="1">4.1.1.48</ecNumber>
    </recommendedName>
</protein>
<accession>B2SL03</accession>
<sequence>MSDILNTILARKADEVAERSARVPLAELIARSADLPLTRGFAAAMQASIAAGDPAVIAEVKKASPSKGVIRPDFHPADIAVSYEFGGATCLSVLTDVDFFQGSDAYLRQARDACTLPVLRKDFTVDPYQVYEARVLGADCILLIVSALEDAQLADLSGLAMQLGLDVLVEVHDVDELERAVQVPVPLIGINNRNLRTFEVTLQTTLDMRAAVPRDRVLVTESGIVTQADVQLMRSNDVNAFLVGETFMRAAEPGESLRQLFFAHD</sequence>
<reference key="1">
    <citation type="journal article" date="2008" name="BMC Genomics">
        <title>Genome sequence and rapid evolution of the rice pathogen Xanthomonas oryzae pv. oryzae PXO99A.</title>
        <authorList>
            <person name="Salzberg S.L."/>
            <person name="Sommer D.D."/>
            <person name="Schatz M.C."/>
            <person name="Phillippy A.M."/>
            <person name="Rabinowicz P.D."/>
            <person name="Tsuge S."/>
            <person name="Furutani A."/>
            <person name="Ochiai H."/>
            <person name="Delcher A.L."/>
            <person name="Kelley D."/>
            <person name="Madupu R."/>
            <person name="Puiu D."/>
            <person name="Radune D."/>
            <person name="Shumway M."/>
            <person name="Trapnell C."/>
            <person name="Aparna G."/>
            <person name="Jha G."/>
            <person name="Pandey A."/>
            <person name="Patil P.B."/>
            <person name="Ishihara H."/>
            <person name="Meyer D.F."/>
            <person name="Szurek B."/>
            <person name="Verdier V."/>
            <person name="Koebnik R."/>
            <person name="Dow J.M."/>
            <person name="Ryan R.P."/>
            <person name="Hirata H."/>
            <person name="Tsuyumu S."/>
            <person name="Won Lee S."/>
            <person name="Seo Y.-S."/>
            <person name="Sriariyanum M."/>
            <person name="Ronald P.C."/>
            <person name="Sonti R.V."/>
            <person name="Van Sluys M.-A."/>
            <person name="Leach J.E."/>
            <person name="White F.F."/>
            <person name="Bogdanove A.J."/>
        </authorList>
    </citation>
    <scope>NUCLEOTIDE SEQUENCE [LARGE SCALE GENOMIC DNA]</scope>
    <source>
        <strain>PXO99A</strain>
    </source>
</reference>
<organism>
    <name type="scientific">Xanthomonas oryzae pv. oryzae (strain PXO99A)</name>
    <dbReference type="NCBI Taxonomy" id="360094"/>
    <lineage>
        <taxon>Bacteria</taxon>
        <taxon>Pseudomonadati</taxon>
        <taxon>Pseudomonadota</taxon>
        <taxon>Gammaproteobacteria</taxon>
        <taxon>Lysobacterales</taxon>
        <taxon>Lysobacteraceae</taxon>
        <taxon>Xanthomonas</taxon>
    </lineage>
</organism>
<comment type="catalytic activity">
    <reaction evidence="1">
        <text>1-(2-carboxyphenylamino)-1-deoxy-D-ribulose 5-phosphate + H(+) = (1S,2R)-1-C-(indol-3-yl)glycerol 3-phosphate + CO2 + H2O</text>
        <dbReference type="Rhea" id="RHEA:23476"/>
        <dbReference type="ChEBI" id="CHEBI:15377"/>
        <dbReference type="ChEBI" id="CHEBI:15378"/>
        <dbReference type="ChEBI" id="CHEBI:16526"/>
        <dbReference type="ChEBI" id="CHEBI:58613"/>
        <dbReference type="ChEBI" id="CHEBI:58866"/>
        <dbReference type="EC" id="4.1.1.48"/>
    </reaction>
</comment>
<comment type="pathway">
    <text evidence="1">Amino-acid biosynthesis; L-tryptophan biosynthesis; L-tryptophan from chorismate: step 4/5.</text>
</comment>
<comment type="similarity">
    <text evidence="1">Belongs to the TrpC family.</text>
</comment>
<evidence type="ECO:0000255" key="1">
    <source>
        <dbReference type="HAMAP-Rule" id="MF_00134"/>
    </source>
</evidence>
<gene>
    <name evidence="1" type="primary">trpC</name>
    <name type="ordered locus">PXO_04004</name>
</gene>
<proteinExistence type="inferred from homology"/>
<dbReference type="EC" id="4.1.1.48" evidence="1"/>
<dbReference type="EMBL" id="CP000967">
    <property type="protein sequence ID" value="ACD57280.1"/>
    <property type="molecule type" value="Genomic_DNA"/>
</dbReference>
<dbReference type="SMR" id="B2SL03"/>
<dbReference type="KEGG" id="xop:PXO_04004"/>
<dbReference type="eggNOG" id="COG0134">
    <property type="taxonomic scope" value="Bacteria"/>
</dbReference>
<dbReference type="HOGENOM" id="CLU_034247_2_0_6"/>
<dbReference type="UniPathway" id="UPA00035">
    <property type="reaction ID" value="UER00043"/>
</dbReference>
<dbReference type="PHI-base" id="PHI:9984"/>
<dbReference type="Proteomes" id="UP000001740">
    <property type="component" value="Chromosome"/>
</dbReference>
<dbReference type="GO" id="GO:0004425">
    <property type="term" value="F:indole-3-glycerol-phosphate synthase activity"/>
    <property type="evidence" value="ECO:0007669"/>
    <property type="project" value="UniProtKB-UniRule"/>
</dbReference>
<dbReference type="GO" id="GO:0004640">
    <property type="term" value="F:phosphoribosylanthranilate isomerase activity"/>
    <property type="evidence" value="ECO:0007669"/>
    <property type="project" value="TreeGrafter"/>
</dbReference>
<dbReference type="GO" id="GO:0000162">
    <property type="term" value="P:L-tryptophan biosynthetic process"/>
    <property type="evidence" value="ECO:0007669"/>
    <property type="project" value="UniProtKB-UniRule"/>
</dbReference>
<dbReference type="CDD" id="cd00331">
    <property type="entry name" value="IGPS"/>
    <property type="match status" value="1"/>
</dbReference>
<dbReference type="FunFam" id="3.20.20.70:FF:000024">
    <property type="entry name" value="Indole-3-glycerol phosphate synthase"/>
    <property type="match status" value="1"/>
</dbReference>
<dbReference type="Gene3D" id="3.20.20.70">
    <property type="entry name" value="Aldolase class I"/>
    <property type="match status" value="1"/>
</dbReference>
<dbReference type="HAMAP" id="MF_00134_B">
    <property type="entry name" value="IGPS_B"/>
    <property type="match status" value="1"/>
</dbReference>
<dbReference type="InterPro" id="IPR013785">
    <property type="entry name" value="Aldolase_TIM"/>
</dbReference>
<dbReference type="InterPro" id="IPR045186">
    <property type="entry name" value="Indole-3-glycerol_P_synth"/>
</dbReference>
<dbReference type="InterPro" id="IPR013798">
    <property type="entry name" value="Indole-3-glycerol_P_synth_dom"/>
</dbReference>
<dbReference type="InterPro" id="IPR001468">
    <property type="entry name" value="Indole-3-GlycerolPSynthase_CS"/>
</dbReference>
<dbReference type="InterPro" id="IPR011060">
    <property type="entry name" value="RibuloseP-bd_barrel"/>
</dbReference>
<dbReference type="NCBIfam" id="NF001370">
    <property type="entry name" value="PRK00278.1-2"/>
    <property type="match status" value="1"/>
</dbReference>
<dbReference type="NCBIfam" id="NF001373">
    <property type="entry name" value="PRK00278.1-6"/>
    <property type="match status" value="1"/>
</dbReference>
<dbReference type="NCBIfam" id="NF001377">
    <property type="entry name" value="PRK00278.2-4"/>
    <property type="match status" value="1"/>
</dbReference>
<dbReference type="PANTHER" id="PTHR22854:SF2">
    <property type="entry name" value="INDOLE-3-GLYCEROL-PHOSPHATE SYNTHASE"/>
    <property type="match status" value="1"/>
</dbReference>
<dbReference type="PANTHER" id="PTHR22854">
    <property type="entry name" value="TRYPTOPHAN BIOSYNTHESIS PROTEIN"/>
    <property type="match status" value="1"/>
</dbReference>
<dbReference type="Pfam" id="PF00218">
    <property type="entry name" value="IGPS"/>
    <property type="match status" value="1"/>
</dbReference>
<dbReference type="SUPFAM" id="SSF51366">
    <property type="entry name" value="Ribulose-phoshate binding barrel"/>
    <property type="match status" value="1"/>
</dbReference>
<dbReference type="PROSITE" id="PS00614">
    <property type="entry name" value="IGPS"/>
    <property type="match status" value="1"/>
</dbReference>
<name>TRPC_XANOP</name>
<keyword id="KW-0028">Amino-acid biosynthesis</keyword>
<keyword id="KW-0057">Aromatic amino acid biosynthesis</keyword>
<keyword id="KW-0210">Decarboxylase</keyword>
<keyword id="KW-0456">Lyase</keyword>
<keyword id="KW-0822">Tryptophan biosynthesis</keyword>